<proteinExistence type="inferred from homology"/>
<comment type="function">
    <text evidence="1">ATP-dependent carboxylate-amine ligase which exhibits weak glutamate--cysteine ligase activity.</text>
</comment>
<comment type="catalytic activity">
    <reaction evidence="1">
        <text>L-cysteine + L-glutamate + ATP = gamma-L-glutamyl-L-cysteine + ADP + phosphate + H(+)</text>
        <dbReference type="Rhea" id="RHEA:13285"/>
        <dbReference type="ChEBI" id="CHEBI:15378"/>
        <dbReference type="ChEBI" id="CHEBI:29985"/>
        <dbReference type="ChEBI" id="CHEBI:30616"/>
        <dbReference type="ChEBI" id="CHEBI:35235"/>
        <dbReference type="ChEBI" id="CHEBI:43474"/>
        <dbReference type="ChEBI" id="CHEBI:58173"/>
        <dbReference type="ChEBI" id="CHEBI:456216"/>
        <dbReference type="EC" id="6.3.2.2"/>
    </reaction>
</comment>
<comment type="similarity">
    <text evidence="1">Belongs to the glutamate--cysteine ligase type 2 family. YbdK subfamily.</text>
</comment>
<gene>
    <name type="ordered locus">Rpic_3493</name>
</gene>
<sequence length="377" mass="42266">MSLEPFSKSEALTFGVELELQLVNRHDYDLASASPDLLRMLKGKEYPGDIKPEITDSMIEISTGICHSHDEALWQLREMRDRMAEAATALNIGICGGGTHPFQQWSQRQISQSPRYQYISDLYGYLAKQFTVFGQHVHIGCPNPDDALYLLHAMSRYVPHFIALAASSPFVQGVDTGFASARMNSVSAFPMSGRAPFVLTWDAFIAYFDKMHATGVIESMKDFYWDIRPKPEFGTIEVRVMDTPLTVERAAAIAAYIQALGRWLLLDRPFMPVEDDYLVYTFNRFQACRFGLAGEYVDPATGNRGALADHILETSKLLSAHAEALSSEGALDMVREVVEARDADAEWIRAAQRETRNLHETVRRGCGRWTQAATQPA</sequence>
<accession>B2UG86</accession>
<protein>
    <recommendedName>
        <fullName evidence="1">Putative glutamate--cysteine ligase 2</fullName>
        <ecNumber evidence="1">6.3.2.2</ecNumber>
    </recommendedName>
    <alternativeName>
        <fullName evidence="1">Gamma-glutamylcysteine synthetase 2</fullName>
        <shortName evidence="1">GCS 2</shortName>
        <shortName evidence="1">Gamma-GCS 2</shortName>
    </alternativeName>
</protein>
<dbReference type="EC" id="6.3.2.2" evidence="1"/>
<dbReference type="EMBL" id="CP001068">
    <property type="protein sequence ID" value="ACD28613.1"/>
    <property type="molecule type" value="Genomic_DNA"/>
</dbReference>
<dbReference type="SMR" id="B2UG86"/>
<dbReference type="STRING" id="402626.Rpic_3493"/>
<dbReference type="KEGG" id="rpi:Rpic_3493"/>
<dbReference type="eggNOG" id="COG2170">
    <property type="taxonomic scope" value="Bacteria"/>
</dbReference>
<dbReference type="HOGENOM" id="CLU_044848_1_1_4"/>
<dbReference type="GO" id="GO:0005524">
    <property type="term" value="F:ATP binding"/>
    <property type="evidence" value="ECO:0007669"/>
    <property type="project" value="UniProtKB-KW"/>
</dbReference>
<dbReference type="GO" id="GO:0004357">
    <property type="term" value="F:glutamate-cysteine ligase activity"/>
    <property type="evidence" value="ECO:0007669"/>
    <property type="project" value="UniProtKB-EC"/>
</dbReference>
<dbReference type="GO" id="GO:0042398">
    <property type="term" value="P:modified amino acid biosynthetic process"/>
    <property type="evidence" value="ECO:0007669"/>
    <property type="project" value="InterPro"/>
</dbReference>
<dbReference type="Gene3D" id="3.30.590.20">
    <property type="match status" value="1"/>
</dbReference>
<dbReference type="HAMAP" id="MF_01609">
    <property type="entry name" value="Glu_cys_ligase_2"/>
    <property type="match status" value="1"/>
</dbReference>
<dbReference type="InterPro" id="IPR050141">
    <property type="entry name" value="GCL_type2/YbdK_subfam"/>
</dbReference>
<dbReference type="InterPro" id="IPR006336">
    <property type="entry name" value="GCS2"/>
</dbReference>
<dbReference type="InterPro" id="IPR014746">
    <property type="entry name" value="Gln_synth/guanido_kin_cat_dom"/>
</dbReference>
<dbReference type="InterPro" id="IPR011793">
    <property type="entry name" value="YbdK"/>
</dbReference>
<dbReference type="NCBIfam" id="TIGR02050">
    <property type="entry name" value="gshA_cyan_rel"/>
    <property type="match status" value="1"/>
</dbReference>
<dbReference type="NCBIfam" id="NF010040">
    <property type="entry name" value="PRK13516.1"/>
    <property type="match status" value="1"/>
</dbReference>
<dbReference type="PANTHER" id="PTHR36510">
    <property type="entry name" value="GLUTAMATE--CYSTEINE LIGASE 2-RELATED"/>
    <property type="match status" value="1"/>
</dbReference>
<dbReference type="PANTHER" id="PTHR36510:SF1">
    <property type="entry name" value="GLUTAMATE--CYSTEINE LIGASE 2-RELATED"/>
    <property type="match status" value="1"/>
</dbReference>
<dbReference type="Pfam" id="PF04107">
    <property type="entry name" value="GCS2"/>
    <property type="match status" value="1"/>
</dbReference>
<dbReference type="SUPFAM" id="SSF55931">
    <property type="entry name" value="Glutamine synthetase/guanido kinase"/>
    <property type="match status" value="1"/>
</dbReference>
<evidence type="ECO:0000255" key="1">
    <source>
        <dbReference type="HAMAP-Rule" id="MF_01609"/>
    </source>
</evidence>
<name>GCS2_RALPJ</name>
<feature type="chain" id="PRO_1000148226" description="Putative glutamate--cysteine ligase 2">
    <location>
        <begin position="1"/>
        <end position="377"/>
    </location>
</feature>
<reference key="1">
    <citation type="submission" date="2008-05" db="EMBL/GenBank/DDBJ databases">
        <title>Complete sequence of chromosome 1 of Ralstonia pickettii 12J.</title>
        <authorList>
            <person name="Lucas S."/>
            <person name="Copeland A."/>
            <person name="Lapidus A."/>
            <person name="Glavina del Rio T."/>
            <person name="Dalin E."/>
            <person name="Tice H."/>
            <person name="Bruce D."/>
            <person name="Goodwin L."/>
            <person name="Pitluck S."/>
            <person name="Meincke L."/>
            <person name="Brettin T."/>
            <person name="Detter J.C."/>
            <person name="Han C."/>
            <person name="Kuske C.R."/>
            <person name="Schmutz J."/>
            <person name="Larimer F."/>
            <person name="Land M."/>
            <person name="Hauser L."/>
            <person name="Kyrpides N."/>
            <person name="Mikhailova N."/>
            <person name="Marsh T."/>
            <person name="Richardson P."/>
        </authorList>
    </citation>
    <scope>NUCLEOTIDE SEQUENCE [LARGE SCALE GENOMIC DNA]</scope>
    <source>
        <strain>12J</strain>
    </source>
</reference>
<keyword id="KW-0067">ATP-binding</keyword>
<keyword id="KW-0436">Ligase</keyword>
<keyword id="KW-0547">Nucleotide-binding</keyword>
<organism>
    <name type="scientific">Ralstonia pickettii (strain 12J)</name>
    <dbReference type="NCBI Taxonomy" id="402626"/>
    <lineage>
        <taxon>Bacteria</taxon>
        <taxon>Pseudomonadati</taxon>
        <taxon>Pseudomonadota</taxon>
        <taxon>Betaproteobacteria</taxon>
        <taxon>Burkholderiales</taxon>
        <taxon>Burkholderiaceae</taxon>
        <taxon>Ralstonia</taxon>
    </lineage>
</organism>